<protein>
    <recommendedName>
        <fullName evidence="1">U4/U6 snRNA-associated-splicing factor PRP24</fullName>
        <shortName evidence="1">U4/U6 snRNP protein</shortName>
    </recommendedName>
</protein>
<proteinExistence type="inferred from homology"/>
<comment type="function">
    <text evidence="1 3">Functions as a recycling factor of the spliceosome, a machinery that forms on each precursor-messenger RNA (pre-mRNA) and catalyzes the removal of introns (PubMed:10743565). Chaperones the re-annealing of U4 and U6 snRNAs (small nuclear RNAs) released from previous rounds of splicing, an initial step in reforming the U4/U6-U5 tri-snRNP (small nuclear ribonucleoprotein) that can reassemble into another spliceosome complex; this step involves binding U6 and facilitating the unwinding of the U6 internal stem loop, followed by base-pairing of U6 to U4 (By similarity).</text>
</comment>
<comment type="subcellular location">
    <subcellularLocation>
        <location evidence="1">Nucleus</location>
    </subcellularLocation>
</comment>
<keyword id="KW-0507">mRNA processing</keyword>
<keyword id="KW-0508">mRNA splicing</keyword>
<keyword id="KW-0539">Nucleus</keyword>
<keyword id="KW-0677">Repeat</keyword>
<keyword id="KW-0694">RNA-binding</keyword>
<sequence>MERIKHAATNSSLDRDGMAAVVDMYATWCGYLRRCAMDPNASDESVDLADSGLVAALEAVQVWGERRFGSAFQGDPNYRLERIMIYHLTEKHGAIDEAREHWDKLAQKELLAHDYSFWLSYYMWEMNLLQSQKGTGRSPTPAPAARLSRTPSRPASILQRALQVSQLNWPERVIEIYVKHCNDFESSDVLQNALDEVHNLQRVIAQRRKDATAAQTAQAEAHARAYESQALEASAAAAEAQALGKQQTGDPQDDLNAGVKRKWEAIASGETPESATKKPKNEDIGVNAAAPNSDQKSQENQPAKRDRENTSVFVSNLPSDVTITKVRQYFREYGHVNNIQLKHEENGKSTVALVEFRSVEDAQTALIRDGKYFGDHTISVKEAAGITLYVTNFPPSTDDESLHRLFGKSSNIFGIRWPSLKYNAHRRFCYVSFRDAESAAKATGLHGKMLEGKYKLSVQYSDPAAKKAREGATDEGREVHIKNIPQEFDEKEIEQLVSKYGTVKRVRLLHNMAGRSRGSAFVDLETKDEAERVVAELDKVKLGTQILKVELSVSAKFKPSARETSVASESATCNGGQEAPDEAKGEAGNEARGNLHLRSFALLGIPDTVNITRVRSLAEPHGHITKLKLYPEHGGAIIEYEDETTAGKAQLALDSTQLEGHTLRVDAVPQLFKEKSGVRIDRVDIAKRRPPKPTADTTSATMGKKAAPTTAPALLPAFVRRPVLGGKGVKHGLGFSAISATTSTKKDGQPTATNGAATSSTSSDTAPKKSNADFRALFLAGKSSTDSKEKVSEEKSKASGAPASVDKPDSKPDDTKMEIDVVVNGH</sequence>
<accession>Q01491</accession>
<evidence type="ECO:0000250" key="1">
    <source>
        <dbReference type="UniProtKB" id="P49960"/>
    </source>
</evidence>
<evidence type="ECO:0000255" key="2">
    <source>
        <dbReference type="PROSITE-ProRule" id="PRU00176"/>
    </source>
</evidence>
<evidence type="ECO:0000269" key="3">
    <source>
    </source>
</evidence>
<evidence type="ECO:0000303" key="4">
    <source>
    </source>
</evidence>
<evidence type="ECO:0000305" key="5"/>
<evidence type="ECO:0000312" key="6">
    <source>
        <dbReference type="EMBL" id="AAA76605.1"/>
    </source>
</evidence>
<feature type="chain" id="PRO_0000462322" description="U4/U6 snRNA-associated-splicing factor PRP24">
    <location>
        <begin position="1"/>
        <end position="826"/>
    </location>
</feature>
<feature type="domain" description="RRM 1" evidence="2">
    <location>
        <begin position="310"/>
        <end position="385"/>
    </location>
</feature>
<feature type="domain" description="RRM 2" evidence="2">
    <location>
        <begin position="386"/>
        <end position="463"/>
    </location>
</feature>
<feature type="domain" description="RRM 3" evidence="2">
    <location>
        <begin position="477"/>
        <end position="554"/>
    </location>
</feature>
<feature type="domain" description="RRM 4" evidence="2">
    <location>
        <begin position="598"/>
        <end position="670"/>
    </location>
</feature>
<reference evidence="5" key="1">
    <citation type="journal article" date="2000" name="Curr. Genet.">
        <title>A gene associated with filamentous growth in Ophiostoma novo-ulmi has RNA-binding motifs and is similar to a yeast gene involved in mRNA splicing.</title>
        <authorList>
            <person name="Pereira V."/>
            <person name="Royer J.C."/>
            <person name="Hintz W.E."/>
            <person name="Field D."/>
            <person name="Bowden C."/>
            <person name="Kokurewicz K."/>
            <person name="Hubbes M."/>
            <person name="Horgen P.A."/>
        </authorList>
    </citation>
    <scope>NUCLEOTIDE SEQUENCE [GENOMIC DNA]</scope>
    <scope>FUNCTION</scope>
    <source>
        <strain evidence="4">MH75</strain>
    </source>
</reference>
<dbReference type="EMBL" id="U35661">
    <property type="protein sequence ID" value="AAA76605.1"/>
    <property type="molecule type" value="Genomic_DNA"/>
</dbReference>
<dbReference type="GO" id="GO:0003723">
    <property type="term" value="F:RNA binding"/>
    <property type="evidence" value="ECO:0007669"/>
    <property type="project" value="UniProtKB-UniRule"/>
</dbReference>
<dbReference type="CDD" id="cd12296">
    <property type="entry name" value="RRM1_Prp24"/>
    <property type="match status" value="1"/>
</dbReference>
<dbReference type="CDD" id="cd12297">
    <property type="entry name" value="RRM2_Prp24"/>
    <property type="match status" value="1"/>
</dbReference>
<dbReference type="CDD" id="cd12299">
    <property type="entry name" value="RRM4_Prp24"/>
    <property type="match status" value="1"/>
</dbReference>
<dbReference type="CDD" id="cd00590">
    <property type="entry name" value="RRM_SF"/>
    <property type="match status" value="1"/>
</dbReference>
<dbReference type="FunFam" id="3.30.70.330:FF:000523">
    <property type="entry name" value="Pre-mRNA splicing factor (Prp24), putative"/>
    <property type="match status" value="1"/>
</dbReference>
<dbReference type="FunFam" id="3.30.70.330:FF:000365">
    <property type="entry name" value="U4/U6 snRNA-associated-splicing factor PRP24"/>
    <property type="match status" value="1"/>
</dbReference>
<dbReference type="Gene3D" id="3.30.70.330">
    <property type="match status" value="4"/>
</dbReference>
<dbReference type="InterPro" id="IPR012677">
    <property type="entry name" value="Nucleotide-bd_a/b_plait_sf"/>
</dbReference>
<dbReference type="InterPro" id="IPR034397">
    <property type="entry name" value="Prp24_RRM1"/>
</dbReference>
<dbReference type="InterPro" id="IPR034398">
    <property type="entry name" value="Prp24_RRM2"/>
</dbReference>
<dbReference type="InterPro" id="IPR035979">
    <property type="entry name" value="RBD_domain_sf"/>
</dbReference>
<dbReference type="InterPro" id="IPR000504">
    <property type="entry name" value="RRM_dom"/>
</dbReference>
<dbReference type="InterPro" id="IPR003954">
    <property type="entry name" value="RRM_dom_euk"/>
</dbReference>
<dbReference type="InterPro" id="IPR031766">
    <property type="entry name" value="RRM_occluded"/>
</dbReference>
<dbReference type="PANTHER" id="PTHR10352">
    <property type="entry name" value="EUKARYOTIC TRANSLATION INITIATION FACTOR 3 SUBUNIT G"/>
    <property type="match status" value="1"/>
</dbReference>
<dbReference type="Pfam" id="PF00076">
    <property type="entry name" value="RRM_1"/>
    <property type="match status" value="3"/>
</dbReference>
<dbReference type="Pfam" id="PF16842">
    <property type="entry name" value="RRM_occluded"/>
    <property type="match status" value="1"/>
</dbReference>
<dbReference type="SMART" id="SM00360">
    <property type="entry name" value="RRM"/>
    <property type="match status" value="4"/>
</dbReference>
<dbReference type="SMART" id="SM00361">
    <property type="entry name" value="RRM_1"/>
    <property type="match status" value="3"/>
</dbReference>
<dbReference type="SUPFAM" id="SSF54928">
    <property type="entry name" value="RNA-binding domain, RBD"/>
    <property type="match status" value="2"/>
</dbReference>
<dbReference type="PROSITE" id="PS50102">
    <property type="entry name" value="RRM"/>
    <property type="match status" value="4"/>
</dbReference>
<organism evidence="6">
    <name type="scientific">Ophiostoma ulmi</name>
    <name type="common">Dutch elm disease fungus</name>
    <dbReference type="NCBI Taxonomy" id="5174"/>
    <lineage>
        <taxon>Eukaryota</taxon>
        <taxon>Fungi</taxon>
        <taxon>Dikarya</taxon>
        <taxon>Ascomycota</taxon>
        <taxon>Pezizomycotina</taxon>
        <taxon>Sordariomycetes</taxon>
        <taxon>Sordariomycetidae</taxon>
        <taxon>Ophiostomatales</taxon>
        <taxon>Ophiostomataceae</taxon>
        <taxon>Ophiostoma</taxon>
    </lineage>
</organism>
<gene>
    <name evidence="5" type="primary">PRP24</name>
    <name evidence="4" type="synonym">col1</name>
</gene>
<name>SART3_OPHUL</name>